<keyword id="KW-0053">Apoptosis</keyword>
<keyword id="KW-0217">Developmental protein</keyword>
<keyword id="KW-0539">Nucleus</keyword>
<keyword id="KW-1185">Reference proteome</keyword>
<evidence type="ECO:0000256" key="1">
    <source>
        <dbReference type="SAM" id="MobiDB-lite"/>
    </source>
</evidence>
<evidence type="ECO:0000269" key="2">
    <source>
    </source>
</evidence>
<evidence type="ECO:0000303" key="3">
    <source>
    </source>
</evidence>
<evidence type="ECO:0000305" key="4"/>
<evidence type="ECO:0000312" key="5">
    <source>
        <dbReference type="EMBL" id="BAD15974.1"/>
    </source>
</evidence>
<evidence type="ECO:0000312" key="6">
    <source>
        <dbReference type="EMBL" id="BAF08570.1"/>
    </source>
</evidence>
<evidence type="ECO:0000312" key="7">
    <source>
        <dbReference type="EMBL" id="EAZ22757.1"/>
    </source>
</evidence>
<sequence>MAASDADAAEVERLYELGERLSSAKDKSQHAADYEAIISAVKGQSVKAKQLAAQLIPRFFRSFPALAPRAMEAMFDLVDMEELATRIQAIRGFPLLAKDAEFVSKIADILGQLLASEENVERDAVHKALMSLIRQDVKSSLQPLFKHVESGSEIREKVICFLKDKVFPVKAELLKPQAEMERYITDLIKKSVLDVTGLEFKLFMDFLRSLSIFGDSAPRESFQELIEIIQAQADLDAQFNVSDIDHIERWTSCMYMALPIFMRGGSSSKFLNYFVKQIVPVFDKIPEEKKLDLLKTVAASSPYATAQDARQLLPPVVQLLKKYMPGKKVEDINHNYVECLMYIFHHLAHKTPNTTNSLCGYKIVTGQPSDRLGEDFSEHYKDFTERLTGTEETVRAVSKRLTQGMADFNKAISSAKTEEEKTKIKSDQQKSTMTMRAYNNILAMAQPLRAKSPLFIGDKKITLSWMEQPKKPAPTTTGGKRSQPATNGNTPASKKGRGEGAARNQLVNRAFEGLSRGGRGSGRGRGRGGRGRGWGYR</sequence>
<dbReference type="EMBL" id="AP004891">
    <property type="protein sequence ID" value="BAD15974.1"/>
    <property type="molecule type" value="Genomic_DNA"/>
</dbReference>
<dbReference type="EMBL" id="AP008208">
    <property type="protein sequence ID" value="BAF08570.1"/>
    <property type="status" value="ALT_SEQ"/>
    <property type="molecule type" value="Genomic_DNA"/>
</dbReference>
<dbReference type="EMBL" id="AP014958">
    <property type="protein sequence ID" value="BAS78330.1"/>
    <property type="status" value="ALT_SEQ"/>
    <property type="molecule type" value="Genomic_DNA"/>
</dbReference>
<dbReference type="EMBL" id="CM000139">
    <property type="protein sequence ID" value="EAZ22757.1"/>
    <property type="molecule type" value="Genomic_DNA"/>
</dbReference>
<dbReference type="RefSeq" id="XP_015627484.1">
    <property type="nucleotide sequence ID" value="XM_015771998.1"/>
</dbReference>
<dbReference type="SMR" id="Q6Z6S1"/>
<dbReference type="FunCoup" id="Q6Z6S1">
    <property type="interactions" value="2861"/>
</dbReference>
<dbReference type="STRING" id="39947.Q6Z6S1"/>
<dbReference type="PaxDb" id="39947-Q6Z6S1"/>
<dbReference type="EnsemblPlants" id="Os02t0313400-01">
    <property type="protein sequence ID" value="Os02t0313400-01"/>
    <property type="gene ID" value="Os02g0313400"/>
</dbReference>
<dbReference type="Gramene" id="Os02t0313400-01">
    <property type="protein sequence ID" value="Os02t0313400-01"/>
    <property type="gene ID" value="Os02g0313400"/>
</dbReference>
<dbReference type="KEGG" id="dosa:Os02g0313400"/>
<dbReference type="eggNOG" id="KOG2213">
    <property type="taxonomic scope" value="Eukaryota"/>
</dbReference>
<dbReference type="InParanoid" id="Q6Z6S1"/>
<dbReference type="OrthoDB" id="19224at2759"/>
<dbReference type="Proteomes" id="UP000000763">
    <property type="component" value="Chromosome 2"/>
</dbReference>
<dbReference type="Proteomes" id="UP000007752">
    <property type="component" value="Chromosome 2"/>
</dbReference>
<dbReference type="Proteomes" id="UP000059680">
    <property type="component" value="Chromosome 2"/>
</dbReference>
<dbReference type="GO" id="GO:0005634">
    <property type="term" value="C:nucleus"/>
    <property type="evidence" value="ECO:0000314"/>
    <property type="project" value="UniProtKB"/>
</dbReference>
<dbReference type="GO" id="GO:0003729">
    <property type="term" value="F:mRNA binding"/>
    <property type="evidence" value="ECO:0000318"/>
    <property type="project" value="GO_Central"/>
</dbReference>
<dbReference type="GO" id="GO:0009555">
    <property type="term" value="P:pollen development"/>
    <property type="evidence" value="ECO:0000315"/>
    <property type="project" value="UniProtKB"/>
</dbReference>
<dbReference type="GO" id="GO:0043067">
    <property type="term" value="P:regulation of programmed cell death"/>
    <property type="evidence" value="ECO:0000315"/>
    <property type="project" value="UniProtKB"/>
</dbReference>
<dbReference type="InterPro" id="IPR008383">
    <property type="entry name" value="API5"/>
</dbReference>
<dbReference type="InterPro" id="IPR016024">
    <property type="entry name" value="ARM-type_fold"/>
</dbReference>
<dbReference type="PANTHER" id="PTHR12758:SF19">
    <property type="entry name" value="APOPTOSIS INHIBITOR 5"/>
    <property type="match status" value="1"/>
</dbReference>
<dbReference type="PANTHER" id="PTHR12758">
    <property type="entry name" value="APOPTOSIS INHIBITOR 5-RELATED"/>
    <property type="match status" value="1"/>
</dbReference>
<dbReference type="Pfam" id="PF05918">
    <property type="entry name" value="API5"/>
    <property type="match status" value="1"/>
</dbReference>
<dbReference type="SUPFAM" id="SSF48371">
    <property type="entry name" value="ARM repeat"/>
    <property type="match status" value="1"/>
</dbReference>
<gene>
    <name evidence="3" type="primary">API5</name>
    <name evidence="6" type="ordered locus">Os02g0313400</name>
    <name evidence="4" type="ordered locus">LOC_Os02g20930</name>
    <name evidence="7" type="ORF">OsJ_06432</name>
    <name evidence="5" type="ORF">P0705A04.11</name>
</gene>
<proteinExistence type="evidence at protein level"/>
<accession>Q6Z6S1</accession>
<accession>Q0E1R8</accession>
<name>API5_ORYSJ</name>
<protein>
    <recommendedName>
        <fullName>Apoptosis inhibitor 5-like protein API5</fullName>
    </recommendedName>
    <alternativeName>
        <fullName evidence="3">Protein APOPTOSIS INHIBITOR 5</fullName>
    </alternativeName>
</protein>
<reference key="1">
    <citation type="journal article" date="2005" name="Nature">
        <title>The map-based sequence of the rice genome.</title>
        <authorList>
            <consortium name="International rice genome sequencing project (IRGSP)"/>
        </authorList>
    </citation>
    <scope>NUCLEOTIDE SEQUENCE [LARGE SCALE GENOMIC DNA]</scope>
    <source>
        <strain>cv. Nipponbare</strain>
    </source>
</reference>
<reference key="2">
    <citation type="journal article" date="2008" name="Nucleic Acids Res.">
        <title>The rice annotation project database (RAP-DB): 2008 update.</title>
        <authorList>
            <consortium name="The rice annotation project (RAP)"/>
        </authorList>
    </citation>
    <scope>GENOME REANNOTATION</scope>
    <source>
        <strain>cv. Nipponbare</strain>
    </source>
</reference>
<reference key="3">
    <citation type="journal article" date="2013" name="Rice">
        <title>Improvement of the Oryza sativa Nipponbare reference genome using next generation sequence and optical map data.</title>
        <authorList>
            <person name="Kawahara Y."/>
            <person name="de la Bastide M."/>
            <person name="Hamilton J.P."/>
            <person name="Kanamori H."/>
            <person name="McCombie W.R."/>
            <person name="Ouyang S."/>
            <person name="Schwartz D.C."/>
            <person name="Tanaka T."/>
            <person name="Wu J."/>
            <person name="Zhou S."/>
            <person name="Childs K.L."/>
            <person name="Davidson R.M."/>
            <person name="Lin H."/>
            <person name="Quesada-Ocampo L."/>
            <person name="Vaillancourt B."/>
            <person name="Sakai H."/>
            <person name="Lee S.S."/>
            <person name="Kim J."/>
            <person name="Numa H."/>
            <person name="Itoh T."/>
            <person name="Buell C.R."/>
            <person name="Matsumoto T."/>
        </authorList>
    </citation>
    <scope>GENOME REANNOTATION</scope>
    <source>
        <strain>cv. Nipponbare</strain>
    </source>
</reference>
<reference key="4">
    <citation type="journal article" date="2005" name="PLoS Biol.">
        <title>The genomes of Oryza sativa: a history of duplications.</title>
        <authorList>
            <person name="Yu J."/>
            <person name="Wang J."/>
            <person name="Lin W."/>
            <person name="Li S."/>
            <person name="Li H."/>
            <person name="Zhou J."/>
            <person name="Ni P."/>
            <person name="Dong W."/>
            <person name="Hu S."/>
            <person name="Zeng C."/>
            <person name="Zhang J."/>
            <person name="Zhang Y."/>
            <person name="Li R."/>
            <person name="Xu Z."/>
            <person name="Li S."/>
            <person name="Li X."/>
            <person name="Zheng H."/>
            <person name="Cong L."/>
            <person name="Lin L."/>
            <person name="Yin J."/>
            <person name="Geng J."/>
            <person name="Li G."/>
            <person name="Shi J."/>
            <person name="Liu J."/>
            <person name="Lv H."/>
            <person name="Li J."/>
            <person name="Wang J."/>
            <person name="Deng Y."/>
            <person name="Ran L."/>
            <person name="Shi X."/>
            <person name="Wang X."/>
            <person name="Wu Q."/>
            <person name="Li C."/>
            <person name="Ren X."/>
            <person name="Wang J."/>
            <person name="Wang X."/>
            <person name="Li D."/>
            <person name="Liu D."/>
            <person name="Zhang X."/>
            <person name="Ji Z."/>
            <person name="Zhao W."/>
            <person name="Sun Y."/>
            <person name="Zhang Z."/>
            <person name="Bao J."/>
            <person name="Han Y."/>
            <person name="Dong L."/>
            <person name="Ji J."/>
            <person name="Chen P."/>
            <person name="Wu S."/>
            <person name="Liu J."/>
            <person name="Xiao Y."/>
            <person name="Bu D."/>
            <person name="Tan J."/>
            <person name="Yang L."/>
            <person name="Ye C."/>
            <person name="Zhang J."/>
            <person name="Xu J."/>
            <person name="Zhou Y."/>
            <person name="Yu Y."/>
            <person name="Zhang B."/>
            <person name="Zhuang S."/>
            <person name="Wei H."/>
            <person name="Liu B."/>
            <person name="Lei M."/>
            <person name="Yu H."/>
            <person name="Li Y."/>
            <person name="Xu H."/>
            <person name="Wei S."/>
            <person name="He X."/>
            <person name="Fang L."/>
            <person name="Zhang Z."/>
            <person name="Zhang Y."/>
            <person name="Huang X."/>
            <person name="Su Z."/>
            <person name="Tong W."/>
            <person name="Li J."/>
            <person name="Tong Z."/>
            <person name="Li S."/>
            <person name="Ye J."/>
            <person name="Wang L."/>
            <person name="Fang L."/>
            <person name="Lei T."/>
            <person name="Chen C.-S."/>
            <person name="Chen H.-C."/>
            <person name="Xu Z."/>
            <person name="Li H."/>
            <person name="Huang H."/>
            <person name="Zhang F."/>
            <person name="Xu H."/>
            <person name="Li N."/>
            <person name="Zhao C."/>
            <person name="Li S."/>
            <person name="Dong L."/>
            <person name="Huang Y."/>
            <person name="Li L."/>
            <person name="Xi Y."/>
            <person name="Qi Q."/>
            <person name="Li W."/>
            <person name="Zhang B."/>
            <person name="Hu W."/>
            <person name="Zhang Y."/>
            <person name="Tian X."/>
            <person name="Jiao Y."/>
            <person name="Liang X."/>
            <person name="Jin J."/>
            <person name="Gao L."/>
            <person name="Zheng W."/>
            <person name="Hao B."/>
            <person name="Liu S.-M."/>
            <person name="Wang W."/>
            <person name="Yuan L."/>
            <person name="Cao M."/>
            <person name="McDermott J."/>
            <person name="Samudrala R."/>
            <person name="Wang J."/>
            <person name="Wong G.K.-S."/>
            <person name="Yang H."/>
        </authorList>
    </citation>
    <scope>NUCLEOTIDE SEQUENCE [LARGE SCALE GENOMIC DNA]</scope>
    <source>
        <strain>cv. Nipponbare</strain>
    </source>
</reference>
<reference key="5">
    <citation type="journal article" date="2011" name="Plant Cell">
        <title>Rice APOPTOSIS INHIBITOR5 coupled with two DEAD-box adenosine 5'-triphosphate-dependent RNA helicases regulates tapetum degeneration.</title>
        <authorList>
            <person name="Li X."/>
            <person name="Gao X."/>
            <person name="Wei Y."/>
            <person name="Deng L."/>
            <person name="Ouyang Y."/>
            <person name="Chen G."/>
            <person name="Li X."/>
            <person name="Zhang Q."/>
            <person name="Wu C."/>
        </authorList>
    </citation>
    <scope>FUNCTION</scope>
    <scope>INTERACTION WITH AIP1 AND AIP2</scope>
    <scope>SUBCELLULAR LOCATION</scope>
    <scope>DEVELOPMENTAL STAGE</scope>
    <scope>DISRUPTION PHENOTYPE</scope>
</reference>
<feature type="chain" id="PRO_0000436460" description="Apoptosis inhibitor 5-like protein API5">
    <location>
        <begin position="1"/>
        <end position="537"/>
    </location>
</feature>
<feature type="region of interest" description="ARM-like and Heat-like helical repeats" evidence="4">
    <location>
        <begin position="9"/>
        <end position="363"/>
    </location>
</feature>
<feature type="region of interest" description="Disordered" evidence="1">
    <location>
        <begin position="465"/>
        <end position="537"/>
    </location>
</feature>
<feature type="compositionally biased region" description="Polar residues" evidence="1">
    <location>
        <begin position="474"/>
        <end position="492"/>
    </location>
</feature>
<organism>
    <name type="scientific">Oryza sativa subsp. japonica</name>
    <name type="common">Rice</name>
    <dbReference type="NCBI Taxonomy" id="39947"/>
    <lineage>
        <taxon>Eukaryota</taxon>
        <taxon>Viridiplantae</taxon>
        <taxon>Streptophyta</taxon>
        <taxon>Embryophyta</taxon>
        <taxon>Tracheophyta</taxon>
        <taxon>Spermatophyta</taxon>
        <taxon>Magnoliopsida</taxon>
        <taxon>Liliopsida</taxon>
        <taxon>Poales</taxon>
        <taxon>Poaceae</taxon>
        <taxon>BOP clade</taxon>
        <taxon>Oryzoideae</taxon>
        <taxon>Oryzeae</taxon>
        <taxon>Oryzinae</taxon>
        <taxon>Oryza</taxon>
        <taxon>Oryza sativa</taxon>
    </lineage>
</organism>
<comment type="function">
    <text evidence="2">Putative anti-apoptotic factor involved in the regulation of tapetal programmed cell death (PCD) and degeneration during anther development. Interacts directly with the DEAD-box ATP-dependent RNA helicases AIP1 and AIP2 that form dimers and bind the promoter region of the cysteine protease CP1 involved in tapetum PCD.</text>
</comment>
<comment type="subunit">
    <text evidence="2">Interacts with AIP1 and AIP2.</text>
</comment>
<comment type="subcellular location">
    <subcellularLocation>
        <location evidence="2">Nucleus</location>
    </subcellularLocation>
</comment>
<comment type="developmental stage">
    <text evidence="2">During anther development, expressed in tapetal cells, parietal anther wall layers and microsporocytes from late stages 8 to stage 10.</text>
</comment>
<comment type="disruption phenotype">
    <text evidence="2">Male sterility due to lack of tapetal programmed cell death (PCD) and degeneration, leading to defects in formation of male gametophytes.</text>
</comment>
<comment type="similarity">
    <text evidence="4">Belongs to the API5 family.</text>
</comment>
<comment type="sequence caution" evidence="4">
    <conflict type="erroneous gene model prediction">
        <sequence resource="EMBL-CDS" id="BAF08570"/>
    </conflict>
</comment>
<comment type="sequence caution" evidence="4">
    <conflict type="erroneous gene model prediction">
        <sequence resource="EMBL-CDS" id="BAS78330"/>
    </conflict>
</comment>